<proteinExistence type="evidence at protein level"/>
<reference evidence="6" key="1">
    <citation type="journal article" date="2010" name="Peptides">
        <title>CAPA-peptides of praying mantids (Mantodea).</title>
        <authorList>
            <person name="Koehler R."/>
            <person name="Predel R."/>
        </authorList>
    </citation>
    <scope>PROTEIN SEQUENCE</scope>
    <scope>MASS SPECTROMETRY</scope>
    <scope>AMIDATION AT LEU-10</scope>
    <source>
        <tissue evidence="4">Abdominal perisympathetic organs</tissue>
    </source>
</reference>
<comment type="function">
    <text evidence="1">Mediates visceral muscle contractile activity (myotropic activity).</text>
</comment>
<comment type="subcellular location">
    <subcellularLocation>
        <location evidence="2">Secreted</location>
    </subcellularLocation>
</comment>
<comment type="mass spectrometry" mass="1073.6" method="MALDI" evidence="4"/>
<comment type="similarity">
    <text evidence="3">Belongs to the periviscerokinin family.</text>
</comment>
<name>PVK2_POLAI</name>
<sequence length="10" mass="1074">TSGLIAFPRL</sequence>
<evidence type="ECO:0000250" key="1">
    <source>
        <dbReference type="UniProtKB" id="P83923"/>
    </source>
</evidence>
<evidence type="ECO:0000250" key="2">
    <source>
        <dbReference type="UniProtKB" id="P84375"/>
    </source>
</evidence>
<evidence type="ECO:0000255" key="3"/>
<evidence type="ECO:0000269" key="4">
    <source>
    </source>
</evidence>
<evidence type="ECO:0000303" key="5">
    <source>
    </source>
</evidence>
<evidence type="ECO:0000305" key="6"/>
<organism>
    <name type="scientific">Polyspilota aeruginosa</name>
    <name type="common">Madagascan marbled praying mantis</name>
    <dbReference type="NCBI Taxonomy" id="444978"/>
    <lineage>
        <taxon>Eukaryota</taxon>
        <taxon>Metazoa</taxon>
        <taxon>Ecdysozoa</taxon>
        <taxon>Arthropoda</taxon>
        <taxon>Hexapoda</taxon>
        <taxon>Insecta</taxon>
        <taxon>Pterygota</taxon>
        <taxon>Neoptera</taxon>
        <taxon>Polyneoptera</taxon>
        <taxon>Dictyoptera</taxon>
        <taxon>Mantodea</taxon>
        <taxon>Eumantodea</taxon>
        <taxon>Mantoidea</taxon>
        <taxon>Mantidae</taxon>
        <taxon>Tenoderinae</taxon>
        <taxon>Tenoderini</taxon>
        <taxon>Polyspilota</taxon>
    </lineage>
</organism>
<keyword id="KW-0027">Amidation</keyword>
<keyword id="KW-0903">Direct protein sequencing</keyword>
<keyword id="KW-0527">Neuropeptide</keyword>
<keyword id="KW-0964">Secreted</keyword>
<accession>P86667</accession>
<dbReference type="GO" id="GO:0005576">
    <property type="term" value="C:extracellular region"/>
    <property type="evidence" value="ECO:0007669"/>
    <property type="project" value="UniProtKB-SubCell"/>
</dbReference>
<dbReference type="GO" id="GO:0007218">
    <property type="term" value="P:neuropeptide signaling pathway"/>
    <property type="evidence" value="ECO:0007669"/>
    <property type="project" value="UniProtKB-KW"/>
</dbReference>
<dbReference type="InterPro" id="IPR013231">
    <property type="entry name" value="Periviscerokinin"/>
</dbReference>
<dbReference type="Pfam" id="PF08259">
    <property type="entry name" value="Periviscerokin"/>
    <property type="match status" value="1"/>
</dbReference>
<feature type="peptide" id="PRO_0000395594" description="Periviscerokinin-2" evidence="4">
    <location>
        <begin position="1"/>
        <end position="10"/>
    </location>
</feature>
<feature type="modified residue" description="Leucine amide" evidence="4">
    <location>
        <position position="10"/>
    </location>
</feature>
<feature type="unsure residue" description="L or I" evidence="4">
    <location>
        <position position="4"/>
    </location>
</feature>
<feature type="unsure residue" description="I or L" evidence="4">
    <location>
        <position position="5"/>
    </location>
</feature>
<feature type="unsure residue" description="L or I" evidence="4">
    <location>
        <position position="10"/>
    </location>
</feature>
<protein>
    <recommendedName>
        <fullName evidence="5">Periviscerokinin-2</fullName>
        <shortName evidence="5">Polae-PVK-2</shortName>
    </recommendedName>
</protein>